<sequence length="630" mass="72795">MNVDLRLIVRLLLAILLTSLVTTILMGKQIHRRLVKSMVKTTGEKDSLPARQLPKREISPKVADFPPPLTLNQTELDILKIQRNNSFRLPQQEAIKEWQDAIFFKEDSNRRGLGEQGRAVQLPNAKLNPDDFQDFYAELSDRIPLNRSLPDTRPISCRKRKYLENLPNVTVIIAFHDEHLSVLLRSITSIINRSPVELLKQIVLVDDDSNLPELGQQLEEIVAQNFPKIIHILRLPERRGSIKARMEAIRVSSCQVLVFLDSHIEVNTNWLPPLLEPIVINPHIVTRPILDAISRKTFAYAKQNTMTRSGFNWWLESESLPIFPEDKSPDSTPYRTPVLSGAMAIDRNYFLNLGGFDEQLDTWEAEKFEISFKVWMCGGMMLYVPCARVGHIGKRPMKSISSPGYHNFLARNYKRVAEVWMDNYKKYVYDKNPKLYKMANAGLLFQRKTKRNALECKTFDWYMTKVAPDFLKRYLALDSPLVFSGVIESVAFPGFCVDSLNCRHTKPVVLARCTGHNSMPGEHQNWSLTQDHEIQLTNSKDDCLEAQGLRSKSVWLFRCHKNGGNQYWYYNHRHRWIQQGQIWVWCLEAQLASGHKVGKVLANKICDKNQLEQQWKVGRNAPYDPQREPH</sequence>
<accession>Q8IA43</accession>
<accession>Q4V529</accession>
<accession>Q9VQR4</accession>
<reference key="1">
    <citation type="journal article" date="2002" name="J. Biol. Chem.">
        <title>Functional conservation of subfamilies of putative UDP-N-acetylgalactosamine:polypeptide N-acetylgalactosaminyltransferases in Drosophila, Caenorhabditis elegans, and mammals. One subfamily composed of l(2)35Aa is essential in Drosophila.</title>
        <authorList>
            <person name="Schwientek T."/>
            <person name="Bennett E.P."/>
            <person name="Flores C."/>
            <person name="Thacker J."/>
            <person name="Hollmann M."/>
            <person name="Reis C.A."/>
            <person name="Behrens J."/>
            <person name="Mandel U."/>
            <person name="Keck B."/>
            <person name="Schaefer M.A."/>
            <person name="Haselmann K."/>
            <person name="Zubarev R."/>
            <person name="Roepstorff P."/>
            <person name="Burchell J.M."/>
            <person name="Taylor-Papadimitriou J."/>
            <person name="Hollingsworth M.A."/>
            <person name="Clausen H."/>
        </authorList>
    </citation>
    <scope>NUCLEOTIDE SEQUENCE [MRNA]</scope>
</reference>
<reference key="2">
    <citation type="journal article" date="2000" name="Science">
        <title>The genome sequence of Drosophila melanogaster.</title>
        <authorList>
            <person name="Adams M.D."/>
            <person name="Celniker S.E."/>
            <person name="Holt R.A."/>
            <person name="Evans C.A."/>
            <person name="Gocayne J.D."/>
            <person name="Amanatides P.G."/>
            <person name="Scherer S.E."/>
            <person name="Li P.W."/>
            <person name="Hoskins R.A."/>
            <person name="Galle R.F."/>
            <person name="George R.A."/>
            <person name="Lewis S.E."/>
            <person name="Richards S."/>
            <person name="Ashburner M."/>
            <person name="Henderson S.N."/>
            <person name="Sutton G.G."/>
            <person name="Wortman J.R."/>
            <person name="Yandell M.D."/>
            <person name="Zhang Q."/>
            <person name="Chen L.X."/>
            <person name="Brandon R.C."/>
            <person name="Rogers Y.-H.C."/>
            <person name="Blazej R.G."/>
            <person name="Champe M."/>
            <person name="Pfeiffer B.D."/>
            <person name="Wan K.H."/>
            <person name="Doyle C."/>
            <person name="Baxter E.G."/>
            <person name="Helt G."/>
            <person name="Nelson C.R."/>
            <person name="Miklos G.L.G."/>
            <person name="Abril J.F."/>
            <person name="Agbayani A."/>
            <person name="An H.-J."/>
            <person name="Andrews-Pfannkoch C."/>
            <person name="Baldwin D."/>
            <person name="Ballew R.M."/>
            <person name="Basu A."/>
            <person name="Baxendale J."/>
            <person name="Bayraktaroglu L."/>
            <person name="Beasley E.M."/>
            <person name="Beeson K.Y."/>
            <person name="Benos P.V."/>
            <person name="Berman B.P."/>
            <person name="Bhandari D."/>
            <person name="Bolshakov S."/>
            <person name="Borkova D."/>
            <person name="Botchan M.R."/>
            <person name="Bouck J."/>
            <person name="Brokstein P."/>
            <person name="Brottier P."/>
            <person name="Burtis K.C."/>
            <person name="Busam D.A."/>
            <person name="Butler H."/>
            <person name="Cadieu E."/>
            <person name="Center A."/>
            <person name="Chandra I."/>
            <person name="Cherry J.M."/>
            <person name="Cawley S."/>
            <person name="Dahlke C."/>
            <person name="Davenport L.B."/>
            <person name="Davies P."/>
            <person name="de Pablos B."/>
            <person name="Delcher A."/>
            <person name="Deng Z."/>
            <person name="Mays A.D."/>
            <person name="Dew I."/>
            <person name="Dietz S.M."/>
            <person name="Dodson K."/>
            <person name="Doup L.E."/>
            <person name="Downes M."/>
            <person name="Dugan-Rocha S."/>
            <person name="Dunkov B.C."/>
            <person name="Dunn P."/>
            <person name="Durbin K.J."/>
            <person name="Evangelista C.C."/>
            <person name="Ferraz C."/>
            <person name="Ferriera S."/>
            <person name="Fleischmann W."/>
            <person name="Fosler C."/>
            <person name="Gabrielian A.E."/>
            <person name="Garg N.S."/>
            <person name="Gelbart W.M."/>
            <person name="Glasser K."/>
            <person name="Glodek A."/>
            <person name="Gong F."/>
            <person name="Gorrell J.H."/>
            <person name="Gu Z."/>
            <person name="Guan P."/>
            <person name="Harris M."/>
            <person name="Harris N.L."/>
            <person name="Harvey D.A."/>
            <person name="Heiman T.J."/>
            <person name="Hernandez J.R."/>
            <person name="Houck J."/>
            <person name="Hostin D."/>
            <person name="Houston K.A."/>
            <person name="Howland T.J."/>
            <person name="Wei M.-H."/>
            <person name="Ibegwam C."/>
            <person name="Jalali M."/>
            <person name="Kalush F."/>
            <person name="Karpen G.H."/>
            <person name="Ke Z."/>
            <person name="Kennison J.A."/>
            <person name="Ketchum K.A."/>
            <person name="Kimmel B.E."/>
            <person name="Kodira C.D."/>
            <person name="Kraft C.L."/>
            <person name="Kravitz S."/>
            <person name="Kulp D."/>
            <person name="Lai Z."/>
            <person name="Lasko P."/>
            <person name="Lei Y."/>
            <person name="Levitsky A.A."/>
            <person name="Li J.H."/>
            <person name="Li Z."/>
            <person name="Liang Y."/>
            <person name="Lin X."/>
            <person name="Liu X."/>
            <person name="Mattei B."/>
            <person name="McIntosh T.C."/>
            <person name="McLeod M.P."/>
            <person name="McPherson D."/>
            <person name="Merkulov G."/>
            <person name="Milshina N.V."/>
            <person name="Mobarry C."/>
            <person name="Morris J."/>
            <person name="Moshrefi A."/>
            <person name="Mount S.M."/>
            <person name="Moy M."/>
            <person name="Murphy B."/>
            <person name="Murphy L."/>
            <person name="Muzny D.M."/>
            <person name="Nelson D.L."/>
            <person name="Nelson D.R."/>
            <person name="Nelson K.A."/>
            <person name="Nixon K."/>
            <person name="Nusskern D.R."/>
            <person name="Pacleb J.M."/>
            <person name="Palazzolo M."/>
            <person name="Pittman G.S."/>
            <person name="Pan S."/>
            <person name="Pollard J."/>
            <person name="Puri V."/>
            <person name="Reese M.G."/>
            <person name="Reinert K."/>
            <person name="Remington K."/>
            <person name="Saunders R.D.C."/>
            <person name="Scheeler F."/>
            <person name="Shen H."/>
            <person name="Shue B.C."/>
            <person name="Siden-Kiamos I."/>
            <person name="Simpson M."/>
            <person name="Skupski M.P."/>
            <person name="Smith T.J."/>
            <person name="Spier E."/>
            <person name="Spradling A.C."/>
            <person name="Stapleton M."/>
            <person name="Strong R."/>
            <person name="Sun E."/>
            <person name="Svirskas R."/>
            <person name="Tector C."/>
            <person name="Turner R."/>
            <person name="Venter E."/>
            <person name="Wang A.H."/>
            <person name="Wang X."/>
            <person name="Wang Z.-Y."/>
            <person name="Wassarman D.A."/>
            <person name="Weinstock G.M."/>
            <person name="Weissenbach J."/>
            <person name="Williams S.M."/>
            <person name="Woodage T."/>
            <person name="Worley K.C."/>
            <person name="Wu D."/>
            <person name="Yang S."/>
            <person name="Yao Q.A."/>
            <person name="Ye J."/>
            <person name="Yeh R.-F."/>
            <person name="Zaveri J.S."/>
            <person name="Zhan M."/>
            <person name="Zhang G."/>
            <person name="Zhao Q."/>
            <person name="Zheng L."/>
            <person name="Zheng X.H."/>
            <person name="Zhong F.N."/>
            <person name="Zhong W."/>
            <person name="Zhou X."/>
            <person name="Zhu S.C."/>
            <person name="Zhu X."/>
            <person name="Smith H.O."/>
            <person name="Gibbs R.A."/>
            <person name="Myers E.W."/>
            <person name="Rubin G.M."/>
            <person name="Venter J.C."/>
        </authorList>
    </citation>
    <scope>NUCLEOTIDE SEQUENCE [LARGE SCALE GENOMIC DNA]</scope>
    <source>
        <strain>Berkeley</strain>
    </source>
</reference>
<reference key="3">
    <citation type="journal article" date="2002" name="Genome Biol.">
        <title>Annotation of the Drosophila melanogaster euchromatic genome: a systematic review.</title>
        <authorList>
            <person name="Misra S."/>
            <person name="Crosby M.A."/>
            <person name="Mungall C.J."/>
            <person name="Matthews B.B."/>
            <person name="Campbell K.S."/>
            <person name="Hradecky P."/>
            <person name="Huang Y."/>
            <person name="Kaminker J.S."/>
            <person name="Millburn G.H."/>
            <person name="Prochnik S.E."/>
            <person name="Smith C.D."/>
            <person name="Tupy J.L."/>
            <person name="Whitfield E.J."/>
            <person name="Bayraktaroglu L."/>
            <person name="Berman B.P."/>
            <person name="Bettencourt B.R."/>
            <person name="Celniker S.E."/>
            <person name="de Grey A.D.N.J."/>
            <person name="Drysdale R.A."/>
            <person name="Harris N.L."/>
            <person name="Richter J."/>
            <person name="Russo S."/>
            <person name="Schroeder A.J."/>
            <person name="Shu S.Q."/>
            <person name="Stapleton M."/>
            <person name="Yamada C."/>
            <person name="Ashburner M."/>
            <person name="Gelbart W.M."/>
            <person name="Rubin G.M."/>
            <person name="Lewis S.E."/>
        </authorList>
    </citation>
    <scope>GENOME REANNOTATION</scope>
    <source>
        <strain>Berkeley</strain>
    </source>
</reference>
<reference key="4">
    <citation type="submission" date="2005-05" db="EMBL/GenBank/DDBJ databases">
        <authorList>
            <person name="Stapleton M."/>
            <person name="Carlson J.W."/>
            <person name="Chavez C."/>
            <person name="Frise E."/>
            <person name="George R.A."/>
            <person name="Pacleb J.M."/>
            <person name="Park S."/>
            <person name="Wan K.H."/>
            <person name="Yu C."/>
            <person name="Celniker S.E."/>
        </authorList>
    </citation>
    <scope>NUCLEOTIDE SEQUENCE [LARGE SCALE MRNA]</scope>
    <source>
        <strain>Berkeley</strain>
    </source>
</reference>
<reference key="5">
    <citation type="journal article" date="2006" name="Glycobiology">
        <title>Expression of the UDP-GalNAc: polypeptide N-acetylgalactosaminyltransferase family is spatially and temporally regulated during Drosophila development.</title>
        <authorList>
            <person name="Tian E."/>
            <person name="Ten Hagen K.G."/>
        </authorList>
    </citation>
    <scope>TISSUE SPECIFICITY</scope>
    <scope>DEVELOPMENTAL STAGE</scope>
</reference>
<dbReference type="EC" id="2.4.1.41"/>
<dbReference type="EMBL" id="AF324751">
    <property type="protein sequence ID" value="AAN75750.1"/>
    <property type="molecule type" value="mRNA"/>
</dbReference>
<dbReference type="EMBL" id="AE014134">
    <property type="protein sequence ID" value="AAF51101.3"/>
    <property type="molecule type" value="Genomic_DNA"/>
</dbReference>
<dbReference type="EMBL" id="BT022827">
    <property type="protein sequence ID" value="AAY55243.1"/>
    <property type="molecule type" value="mRNA"/>
</dbReference>
<dbReference type="RefSeq" id="NP_722909.2">
    <property type="nucleotide sequence ID" value="NM_164538.5"/>
</dbReference>
<dbReference type="SMR" id="Q8IA43"/>
<dbReference type="FunCoup" id="Q8IA43">
    <property type="interactions" value="71"/>
</dbReference>
<dbReference type="IntAct" id="Q8IA43">
    <property type="interactions" value="1"/>
</dbReference>
<dbReference type="STRING" id="7227.FBpp0077211"/>
<dbReference type="CAZy" id="CBM13">
    <property type="family name" value="Carbohydrate-Binding Module Family 13"/>
</dbReference>
<dbReference type="CAZy" id="GT27">
    <property type="family name" value="Glycosyltransferase Family 27"/>
</dbReference>
<dbReference type="GlyCosmos" id="Q8IA43">
    <property type="glycosylation" value="5 sites, No reported glycans"/>
</dbReference>
<dbReference type="GlyGen" id="Q8IA43">
    <property type="glycosylation" value="5 sites"/>
</dbReference>
<dbReference type="PaxDb" id="7227-FBpp0077211"/>
<dbReference type="DNASU" id="33568"/>
<dbReference type="EnsemblMetazoa" id="FBtr0077522">
    <property type="protein sequence ID" value="FBpp0077211"/>
    <property type="gene ID" value="FBgn0051776"/>
</dbReference>
<dbReference type="GeneID" id="33568"/>
<dbReference type="KEGG" id="dme:Dmel_CG31776"/>
<dbReference type="UCSC" id="CG31776-RA">
    <property type="organism name" value="d. melanogaster"/>
</dbReference>
<dbReference type="AGR" id="FB:FBgn0051776"/>
<dbReference type="FlyBase" id="FBgn0051776">
    <property type="gene designation" value="CG31776"/>
</dbReference>
<dbReference type="VEuPathDB" id="VectorBase:FBgn0051776"/>
<dbReference type="eggNOG" id="KOG3736">
    <property type="taxonomic scope" value="Eukaryota"/>
</dbReference>
<dbReference type="GeneTree" id="ENSGT00940000166027"/>
<dbReference type="HOGENOM" id="CLU_013477_0_1_1"/>
<dbReference type="InParanoid" id="Q8IA43"/>
<dbReference type="OMA" id="IMVFHNT"/>
<dbReference type="OrthoDB" id="7841942at2759"/>
<dbReference type="PhylomeDB" id="Q8IA43"/>
<dbReference type="Reactome" id="R-DME-913709">
    <property type="pathway name" value="O-linked glycosylation of mucins"/>
</dbReference>
<dbReference type="UniPathway" id="UPA00378"/>
<dbReference type="BioGRID-ORCS" id="33568">
    <property type="hits" value="0 hits in 3 CRISPR screens"/>
</dbReference>
<dbReference type="GenomeRNAi" id="33568"/>
<dbReference type="PRO" id="PR:Q8IA43"/>
<dbReference type="Proteomes" id="UP000000803">
    <property type="component" value="Chromosome 2L"/>
</dbReference>
<dbReference type="Bgee" id="FBgn0051776">
    <property type="expression patterns" value="Expressed in embryonic cortex (Drosophila) and 21 other cell types or tissues"/>
</dbReference>
<dbReference type="GO" id="GO:0005794">
    <property type="term" value="C:Golgi apparatus"/>
    <property type="evidence" value="ECO:0000318"/>
    <property type="project" value="GO_Central"/>
</dbReference>
<dbReference type="GO" id="GO:0000139">
    <property type="term" value="C:Golgi membrane"/>
    <property type="evidence" value="ECO:0007669"/>
    <property type="project" value="UniProtKB-SubCell"/>
</dbReference>
<dbReference type="GO" id="GO:0030246">
    <property type="term" value="F:carbohydrate binding"/>
    <property type="evidence" value="ECO:0007669"/>
    <property type="project" value="UniProtKB-KW"/>
</dbReference>
<dbReference type="GO" id="GO:0046872">
    <property type="term" value="F:metal ion binding"/>
    <property type="evidence" value="ECO:0007669"/>
    <property type="project" value="UniProtKB-KW"/>
</dbReference>
<dbReference type="GO" id="GO:0004653">
    <property type="term" value="F:polypeptide N-acetylgalactosaminyltransferase activity"/>
    <property type="evidence" value="ECO:0000250"/>
    <property type="project" value="UniProtKB"/>
</dbReference>
<dbReference type="GO" id="GO:0006493">
    <property type="term" value="P:protein O-linked glycosylation"/>
    <property type="evidence" value="ECO:0000250"/>
    <property type="project" value="UniProtKB"/>
</dbReference>
<dbReference type="CDD" id="cd23461">
    <property type="entry name" value="beta-trefoil_Ricin_Pgant8-like"/>
    <property type="match status" value="1"/>
</dbReference>
<dbReference type="CDD" id="cd02510">
    <property type="entry name" value="pp-GalNAc-T"/>
    <property type="match status" value="1"/>
</dbReference>
<dbReference type="FunFam" id="3.90.550.10:FF:000297">
    <property type="entry name" value="Predicted protein"/>
    <property type="match status" value="1"/>
</dbReference>
<dbReference type="Gene3D" id="2.80.10.50">
    <property type="match status" value="1"/>
</dbReference>
<dbReference type="Gene3D" id="3.90.550.10">
    <property type="entry name" value="Spore Coat Polysaccharide Biosynthesis Protein SpsA, Chain A"/>
    <property type="match status" value="1"/>
</dbReference>
<dbReference type="InterPro" id="IPR045885">
    <property type="entry name" value="GalNAc-T"/>
</dbReference>
<dbReference type="InterPro" id="IPR001173">
    <property type="entry name" value="Glyco_trans_2-like"/>
</dbReference>
<dbReference type="InterPro" id="IPR029044">
    <property type="entry name" value="Nucleotide-diphossugar_trans"/>
</dbReference>
<dbReference type="InterPro" id="IPR035992">
    <property type="entry name" value="Ricin_B-like_lectins"/>
</dbReference>
<dbReference type="InterPro" id="IPR000772">
    <property type="entry name" value="Ricin_B_lectin"/>
</dbReference>
<dbReference type="PANTHER" id="PTHR11675">
    <property type="entry name" value="N-ACETYLGALACTOSAMINYLTRANSFERASE"/>
    <property type="match status" value="1"/>
</dbReference>
<dbReference type="PANTHER" id="PTHR11675:SF134">
    <property type="entry name" value="N-ACETYLGALACTOSAMINYLTRANSFERASE 4-RELATED"/>
    <property type="match status" value="1"/>
</dbReference>
<dbReference type="Pfam" id="PF00535">
    <property type="entry name" value="Glycos_transf_2"/>
    <property type="match status" value="1"/>
</dbReference>
<dbReference type="Pfam" id="PF00652">
    <property type="entry name" value="Ricin_B_lectin"/>
    <property type="match status" value="1"/>
</dbReference>
<dbReference type="SMART" id="SM00458">
    <property type="entry name" value="RICIN"/>
    <property type="match status" value="1"/>
</dbReference>
<dbReference type="SUPFAM" id="SSF53448">
    <property type="entry name" value="Nucleotide-diphospho-sugar transferases"/>
    <property type="match status" value="1"/>
</dbReference>
<dbReference type="SUPFAM" id="SSF50370">
    <property type="entry name" value="Ricin B-like lectins"/>
    <property type="match status" value="1"/>
</dbReference>
<dbReference type="PROSITE" id="PS50231">
    <property type="entry name" value="RICIN_B_LECTIN"/>
    <property type="match status" value="1"/>
</dbReference>
<feature type="chain" id="PRO_0000059164" description="Putative polypeptide N-acetylgalactosaminyltransferase 10">
    <location>
        <begin position="1"/>
        <end position="630"/>
    </location>
</feature>
<feature type="topological domain" description="Cytoplasmic" evidence="2">
    <location>
        <begin position="1"/>
        <end position="6"/>
    </location>
</feature>
<feature type="transmembrane region" description="Helical; Signal-anchor for type II membrane protein" evidence="2">
    <location>
        <begin position="7"/>
        <end position="26"/>
    </location>
</feature>
<feature type="topological domain" description="Lumenal" evidence="2">
    <location>
        <begin position="27"/>
        <end position="630"/>
    </location>
</feature>
<feature type="domain" description="Ricin B-type lectin" evidence="3">
    <location>
        <begin position="483"/>
        <end position="618"/>
    </location>
</feature>
<feature type="region of interest" description="Catalytic subdomain A">
    <location>
        <begin position="166"/>
        <end position="277"/>
    </location>
</feature>
<feature type="region of interest" description="Catalytic subdomain B">
    <location>
        <begin position="333"/>
        <end position="394"/>
    </location>
</feature>
<feature type="binding site" evidence="1">
    <location>
        <position position="207"/>
    </location>
    <ligand>
        <name>substrate</name>
    </ligand>
</feature>
<feature type="binding site" evidence="1">
    <location>
        <position position="238"/>
    </location>
    <ligand>
        <name>substrate</name>
    </ligand>
</feature>
<feature type="binding site" evidence="1">
    <location>
        <position position="261"/>
    </location>
    <ligand>
        <name>Mn(2+)</name>
        <dbReference type="ChEBI" id="CHEBI:29035"/>
    </ligand>
</feature>
<feature type="binding site" evidence="1">
    <location>
        <position position="262"/>
    </location>
    <ligand>
        <name>substrate</name>
    </ligand>
</feature>
<feature type="binding site" evidence="1">
    <location>
        <position position="263"/>
    </location>
    <ligand>
        <name>Mn(2+)</name>
        <dbReference type="ChEBI" id="CHEBI:29035"/>
    </ligand>
</feature>
<feature type="binding site" evidence="1">
    <location>
        <position position="363"/>
    </location>
    <ligand>
        <name>substrate</name>
    </ligand>
</feature>
<feature type="binding site" evidence="1">
    <location>
        <position position="391"/>
    </location>
    <ligand>
        <name>Mn(2+)</name>
        <dbReference type="ChEBI" id="CHEBI:29035"/>
    </ligand>
</feature>
<feature type="glycosylation site" description="N-linked (GlcNAc...) asparagine" evidence="2">
    <location>
        <position position="72"/>
    </location>
</feature>
<feature type="glycosylation site" description="N-linked (GlcNAc...) asparagine" evidence="2">
    <location>
        <position position="84"/>
    </location>
</feature>
<feature type="glycosylation site" description="N-linked (GlcNAc...) asparagine" evidence="2">
    <location>
        <position position="146"/>
    </location>
</feature>
<feature type="glycosylation site" description="N-linked (GlcNAc...) asparagine" evidence="2">
    <location>
        <position position="168"/>
    </location>
</feature>
<feature type="glycosylation site" description="N-linked (GlcNAc...) asparagine" evidence="2">
    <location>
        <position position="525"/>
    </location>
</feature>
<feature type="disulfide bond" evidence="3">
    <location>
        <begin position="157"/>
        <end position="386"/>
    </location>
</feature>
<feature type="disulfide bond" evidence="3">
    <location>
        <begin position="377"/>
        <end position="456"/>
    </location>
</feature>
<feature type="disulfide bond" evidence="3">
    <location>
        <begin position="496"/>
        <end position="513"/>
    </location>
</feature>
<feature type="disulfide bond" evidence="3">
    <location>
        <begin position="543"/>
        <end position="559"/>
    </location>
</feature>
<feature type="disulfide bond" evidence="3">
    <location>
        <begin position="586"/>
        <end position="606"/>
    </location>
</feature>
<gene>
    <name type="primary">pgant10</name>
    <name type="ORF">CG31776</name>
</gene>
<evidence type="ECO:0000250" key="1"/>
<evidence type="ECO:0000255" key="2"/>
<evidence type="ECO:0000255" key="3">
    <source>
        <dbReference type="PROSITE-ProRule" id="PRU00174"/>
    </source>
</evidence>
<evidence type="ECO:0000269" key="4">
    <source>
    </source>
</evidence>
<evidence type="ECO:0000305" key="5"/>
<proteinExistence type="evidence at transcript level"/>
<protein>
    <recommendedName>
        <fullName>Putative polypeptide N-acetylgalactosaminyltransferase 10</fullName>
        <shortName>pp-GaNTase 10</shortName>
        <ecNumber>2.4.1.41</ecNumber>
    </recommendedName>
    <alternativeName>
        <fullName>Protein-UDP acetylgalactosaminyltransferase 10</fullName>
    </alternativeName>
    <alternativeName>
        <fullName>UDP-GalNAc:polypeptide N-acetylgalactosaminyltransferase 10</fullName>
    </alternativeName>
</protein>
<name>GLT10_DROME</name>
<keyword id="KW-1015">Disulfide bond</keyword>
<keyword id="KW-0325">Glycoprotein</keyword>
<keyword id="KW-0328">Glycosyltransferase</keyword>
<keyword id="KW-0333">Golgi apparatus</keyword>
<keyword id="KW-0430">Lectin</keyword>
<keyword id="KW-0464">Manganese</keyword>
<keyword id="KW-0472">Membrane</keyword>
<keyword id="KW-0479">Metal-binding</keyword>
<keyword id="KW-1185">Reference proteome</keyword>
<keyword id="KW-0735">Signal-anchor</keyword>
<keyword id="KW-0808">Transferase</keyword>
<keyword id="KW-0812">Transmembrane</keyword>
<keyword id="KW-1133">Transmembrane helix</keyword>
<comment type="function">
    <text evidence="1">May catalyze the initial reaction in O-linked oligosaccharide biosynthesis, the transfer of an N-acetyl-D-galactosamine residue to a serine or threonine residue on the protein receptor.</text>
</comment>
<comment type="catalytic activity">
    <reaction>
        <text>L-seryl-[protein] + UDP-N-acetyl-alpha-D-galactosamine = a 3-O-[N-acetyl-alpha-D-galactosaminyl]-L-seryl-[protein] + UDP + H(+)</text>
        <dbReference type="Rhea" id="RHEA:23956"/>
        <dbReference type="Rhea" id="RHEA-COMP:9863"/>
        <dbReference type="Rhea" id="RHEA-COMP:12788"/>
        <dbReference type="ChEBI" id="CHEBI:15378"/>
        <dbReference type="ChEBI" id="CHEBI:29999"/>
        <dbReference type="ChEBI" id="CHEBI:53604"/>
        <dbReference type="ChEBI" id="CHEBI:58223"/>
        <dbReference type="ChEBI" id="CHEBI:67138"/>
        <dbReference type="EC" id="2.4.1.41"/>
    </reaction>
</comment>
<comment type="catalytic activity">
    <reaction>
        <text>L-threonyl-[protein] + UDP-N-acetyl-alpha-D-galactosamine = a 3-O-[N-acetyl-alpha-D-galactosaminyl]-L-threonyl-[protein] + UDP + H(+)</text>
        <dbReference type="Rhea" id="RHEA:52424"/>
        <dbReference type="Rhea" id="RHEA-COMP:11060"/>
        <dbReference type="Rhea" id="RHEA-COMP:11689"/>
        <dbReference type="ChEBI" id="CHEBI:15378"/>
        <dbReference type="ChEBI" id="CHEBI:30013"/>
        <dbReference type="ChEBI" id="CHEBI:58223"/>
        <dbReference type="ChEBI" id="CHEBI:67138"/>
        <dbReference type="ChEBI" id="CHEBI:87075"/>
        <dbReference type="EC" id="2.4.1.41"/>
    </reaction>
</comment>
<comment type="cofactor">
    <cofactor evidence="1">
        <name>Mn(2+)</name>
        <dbReference type="ChEBI" id="CHEBI:29035"/>
    </cofactor>
</comment>
<comment type="pathway">
    <text>Protein modification; protein glycosylation.</text>
</comment>
<comment type="subcellular location">
    <subcellularLocation>
        <location evidence="1">Golgi apparatus membrane</location>
        <topology evidence="1">Single-pass type II membrane protein</topology>
    </subcellularLocation>
</comment>
<comment type="tissue specificity">
    <text evidence="4">During embryonic stages 9-11, weakly expressed in the mesoderm. During embryonic stages 12-13, very weak expression is observed in the somatic mesoderm region. No expression detected from stage 14-15. During embryonic stages 16-17, expressed in the epidermis and the antennomaxillary complex. In third instar larvae, expressed ubiquitously in wing, eye-antennal, leg and haltere imaginal disks.</text>
</comment>
<comment type="developmental stage">
    <text evidence="4">Expressed both maternally and zygotically. Expressed throughout embryonic and larval stages.</text>
</comment>
<comment type="domain">
    <text evidence="1">There are two conserved domains in the glycosyltransferase region: the N-terminal domain (domain A, also called GT1 motif), which is probably involved in manganese coordination and substrate binding and the C-terminal domain (domain B, also called Gal/GalNAc-T motif), which is probably involved in catalytic reaction and UDP-Gal binding.</text>
</comment>
<comment type="domain">
    <text evidence="1">The ricin B-type lectin domain binds to GalNAc and contributes to the glycopeptide specificity.</text>
</comment>
<comment type="similarity">
    <text evidence="5">Belongs to the glycosyltransferase 2 family. GalNAc-T subfamily.</text>
</comment>
<organism>
    <name type="scientific">Drosophila melanogaster</name>
    <name type="common">Fruit fly</name>
    <dbReference type="NCBI Taxonomy" id="7227"/>
    <lineage>
        <taxon>Eukaryota</taxon>
        <taxon>Metazoa</taxon>
        <taxon>Ecdysozoa</taxon>
        <taxon>Arthropoda</taxon>
        <taxon>Hexapoda</taxon>
        <taxon>Insecta</taxon>
        <taxon>Pterygota</taxon>
        <taxon>Neoptera</taxon>
        <taxon>Endopterygota</taxon>
        <taxon>Diptera</taxon>
        <taxon>Brachycera</taxon>
        <taxon>Muscomorpha</taxon>
        <taxon>Ephydroidea</taxon>
        <taxon>Drosophilidae</taxon>
        <taxon>Drosophila</taxon>
        <taxon>Sophophora</taxon>
    </lineage>
</organism>